<accession>Q4WRP2</accession>
<gene>
    <name type="primary">mss116</name>
    <name type="ORF">AFUA_1G15620</name>
</gene>
<reference key="1">
    <citation type="journal article" date="2005" name="Nature">
        <title>Genomic sequence of the pathogenic and allergenic filamentous fungus Aspergillus fumigatus.</title>
        <authorList>
            <person name="Nierman W.C."/>
            <person name="Pain A."/>
            <person name="Anderson M.J."/>
            <person name="Wortman J.R."/>
            <person name="Kim H.S."/>
            <person name="Arroyo J."/>
            <person name="Berriman M."/>
            <person name="Abe K."/>
            <person name="Archer D.B."/>
            <person name="Bermejo C."/>
            <person name="Bennett J.W."/>
            <person name="Bowyer P."/>
            <person name="Chen D."/>
            <person name="Collins M."/>
            <person name="Coulsen R."/>
            <person name="Davies R."/>
            <person name="Dyer P.S."/>
            <person name="Farman M.L."/>
            <person name="Fedorova N."/>
            <person name="Fedorova N.D."/>
            <person name="Feldblyum T.V."/>
            <person name="Fischer R."/>
            <person name="Fosker N."/>
            <person name="Fraser A."/>
            <person name="Garcia J.L."/>
            <person name="Garcia M.J."/>
            <person name="Goble A."/>
            <person name="Goldman G.H."/>
            <person name="Gomi K."/>
            <person name="Griffith-Jones S."/>
            <person name="Gwilliam R."/>
            <person name="Haas B.J."/>
            <person name="Haas H."/>
            <person name="Harris D.E."/>
            <person name="Horiuchi H."/>
            <person name="Huang J."/>
            <person name="Humphray S."/>
            <person name="Jimenez J."/>
            <person name="Keller N."/>
            <person name="Khouri H."/>
            <person name="Kitamoto K."/>
            <person name="Kobayashi T."/>
            <person name="Konzack S."/>
            <person name="Kulkarni R."/>
            <person name="Kumagai T."/>
            <person name="Lafton A."/>
            <person name="Latge J.-P."/>
            <person name="Li W."/>
            <person name="Lord A."/>
            <person name="Lu C."/>
            <person name="Majoros W.H."/>
            <person name="May G.S."/>
            <person name="Miller B.L."/>
            <person name="Mohamoud Y."/>
            <person name="Molina M."/>
            <person name="Monod M."/>
            <person name="Mouyna I."/>
            <person name="Mulligan S."/>
            <person name="Murphy L.D."/>
            <person name="O'Neil S."/>
            <person name="Paulsen I."/>
            <person name="Penalva M.A."/>
            <person name="Pertea M."/>
            <person name="Price C."/>
            <person name="Pritchard B.L."/>
            <person name="Quail M.A."/>
            <person name="Rabbinowitsch E."/>
            <person name="Rawlins N."/>
            <person name="Rajandream M.A."/>
            <person name="Reichard U."/>
            <person name="Renauld H."/>
            <person name="Robson G.D."/>
            <person name="Rodriguez de Cordoba S."/>
            <person name="Rodriguez-Pena J.M."/>
            <person name="Ronning C.M."/>
            <person name="Rutter S."/>
            <person name="Salzberg S.L."/>
            <person name="Sanchez M."/>
            <person name="Sanchez-Ferrero J.C."/>
            <person name="Saunders D."/>
            <person name="Seeger K."/>
            <person name="Squares R."/>
            <person name="Squares S."/>
            <person name="Takeuchi M."/>
            <person name="Tekaia F."/>
            <person name="Turner G."/>
            <person name="Vazquez de Aldana C.R."/>
            <person name="Weidman J."/>
            <person name="White O."/>
            <person name="Woodward J.R."/>
            <person name="Yu J.-H."/>
            <person name="Fraser C.M."/>
            <person name="Galagan J.E."/>
            <person name="Asai K."/>
            <person name="Machida M."/>
            <person name="Hall N."/>
            <person name="Barrell B.G."/>
            <person name="Denning D.W."/>
        </authorList>
    </citation>
    <scope>NUCLEOTIDE SEQUENCE [LARGE SCALE GENOMIC DNA]</scope>
    <source>
        <strain>ATCC MYA-4609 / CBS 101355 / FGSC A1100 / Af293</strain>
    </source>
</reference>
<organism>
    <name type="scientific">Aspergillus fumigatus (strain ATCC MYA-4609 / CBS 101355 / FGSC A1100 / Af293)</name>
    <name type="common">Neosartorya fumigata</name>
    <dbReference type="NCBI Taxonomy" id="330879"/>
    <lineage>
        <taxon>Eukaryota</taxon>
        <taxon>Fungi</taxon>
        <taxon>Dikarya</taxon>
        <taxon>Ascomycota</taxon>
        <taxon>Pezizomycotina</taxon>
        <taxon>Eurotiomycetes</taxon>
        <taxon>Eurotiomycetidae</taxon>
        <taxon>Eurotiales</taxon>
        <taxon>Aspergillaceae</taxon>
        <taxon>Aspergillus</taxon>
        <taxon>Aspergillus subgen. Fumigati</taxon>
    </lineage>
</organism>
<sequence length="655" mass="73931">MMLGAVRRYGVVHALRASVPRTICRPSNSQLLRCQTSPVTACPQSVRLLHKSSPFFSSASAQAQAQPDDLQSAAPQEPLREFTDLAERGLVDPKIIRAIVKDMNIKTMTDVQSQTLREILQGDDVLAQAKTGTGKTLAFLTPVFQNIMKDPSLKGLNWRRSQASSSDIRAIIISPTRELAEQIAVEARRLAAHSGVIVQTAVGGTQKREGLRRIQREGCHVLIGTPGRLKDVLSDSYNGVTAPNLSTLVLDEADRLLDDGFSDAIIDIQRLLPDPMKVDRQTLMFSATVPREVMQMVRKTMKPNFKFVKTVRDDEVPTHLTVPQKYVILRGYENAMPALLEFVTKYVEGEKENPNQRPFKAIVYFNSTVQTNLVYETFRNIVEQRHHPLRRVRVYEIHSQLTQARRTRSSDFFRAAKSAILFSSDVTARGMDFPDVTHVIQVSIPRDRATYIHRLGRTARANKTGEGWVLTHRGELPEFLKQLEGIPLNLDKETFATATVDMTKPELDPKSPATRFIQEIKDAVREVPESLKRRAYTSLLGPLRGYFARKQDLIQAINNCVVHGYGLPVPPQLSPTLARNLGLDRVPGVRIANYRGSSDNMSTRPDYRGGDRDMWASNSRRGREFNSDRRESRFGNHRNADDFFGGRRRAYRDDY</sequence>
<name>MS116_ASPFU</name>
<proteinExistence type="inferred from homology"/>
<dbReference type="EC" id="3.6.4.13"/>
<dbReference type="EMBL" id="AAHF01000004">
    <property type="protein sequence ID" value="EAL90890.1"/>
    <property type="molecule type" value="Genomic_DNA"/>
</dbReference>
<dbReference type="RefSeq" id="XP_752928.1">
    <property type="nucleotide sequence ID" value="XM_747835.1"/>
</dbReference>
<dbReference type="SMR" id="Q4WRP2"/>
<dbReference type="FunCoup" id="Q4WRP2">
    <property type="interactions" value="192"/>
</dbReference>
<dbReference type="STRING" id="330879.Q4WRP2"/>
<dbReference type="EnsemblFungi" id="EAL90890">
    <property type="protein sequence ID" value="EAL90890"/>
    <property type="gene ID" value="AFUA_1G15620"/>
</dbReference>
<dbReference type="GeneID" id="3509952"/>
<dbReference type="KEGG" id="afm:AFUA_1G15620"/>
<dbReference type="VEuPathDB" id="FungiDB:Afu1g15620"/>
<dbReference type="eggNOG" id="KOG0342">
    <property type="taxonomic scope" value="Eukaryota"/>
</dbReference>
<dbReference type="HOGENOM" id="CLU_003041_26_6_1"/>
<dbReference type="InParanoid" id="Q4WRP2"/>
<dbReference type="OMA" id="TQREGCH"/>
<dbReference type="OrthoDB" id="193716at2759"/>
<dbReference type="Proteomes" id="UP000002530">
    <property type="component" value="Chromosome 1"/>
</dbReference>
<dbReference type="GO" id="GO:0005759">
    <property type="term" value="C:mitochondrial matrix"/>
    <property type="evidence" value="ECO:0007669"/>
    <property type="project" value="UniProtKB-SubCell"/>
</dbReference>
<dbReference type="GO" id="GO:0005739">
    <property type="term" value="C:mitochondrion"/>
    <property type="evidence" value="ECO:0000318"/>
    <property type="project" value="GO_Central"/>
</dbReference>
<dbReference type="GO" id="GO:0005524">
    <property type="term" value="F:ATP binding"/>
    <property type="evidence" value="ECO:0007669"/>
    <property type="project" value="UniProtKB-KW"/>
</dbReference>
<dbReference type="GO" id="GO:0016887">
    <property type="term" value="F:ATP hydrolysis activity"/>
    <property type="evidence" value="ECO:0007669"/>
    <property type="project" value="RHEA"/>
</dbReference>
<dbReference type="GO" id="GO:0003723">
    <property type="term" value="F:RNA binding"/>
    <property type="evidence" value="ECO:0007669"/>
    <property type="project" value="UniProtKB-KW"/>
</dbReference>
<dbReference type="GO" id="GO:0003724">
    <property type="term" value="F:RNA helicase activity"/>
    <property type="evidence" value="ECO:0007669"/>
    <property type="project" value="UniProtKB-EC"/>
</dbReference>
<dbReference type="GO" id="GO:0006397">
    <property type="term" value="P:mRNA processing"/>
    <property type="evidence" value="ECO:0007669"/>
    <property type="project" value="UniProtKB-KW"/>
</dbReference>
<dbReference type="GO" id="GO:0006417">
    <property type="term" value="P:regulation of translation"/>
    <property type="evidence" value="ECO:0007669"/>
    <property type="project" value="UniProtKB-KW"/>
</dbReference>
<dbReference type="GO" id="GO:0008380">
    <property type="term" value="P:RNA splicing"/>
    <property type="evidence" value="ECO:0007669"/>
    <property type="project" value="UniProtKB-KW"/>
</dbReference>
<dbReference type="CDD" id="cd17964">
    <property type="entry name" value="DEADc_MSS116"/>
    <property type="match status" value="1"/>
</dbReference>
<dbReference type="CDD" id="cd18787">
    <property type="entry name" value="SF2_C_DEAD"/>
    <property type="match status" value="1"/>
</dbReference>
<dbReference type="Gene3D" id="3.40.50.300">
    <property type="entry name" value="P-loop containing nucleotide triphosphate hydrolases"/>
    <property type="match status" value="2"/>
</dbReference>
<dbReference type="InterPro" id="IPR011545">
    <property type="entry name" value="DEAD/DEAH_box_helicase_dom"/>
</dbReference>
<dbReference type="InterPro" id="IPR014001">
    <property type="entry name" value="Helicase_ATP-bd"/>
</dbReference>
<dbReference type="InterPro" id="IPR001650">
    <property type="entry name" value="Helicase_C-like"/>
</dbReference>
<dbReference type="InterPro" id="IPR027417">
    <property type="entry name" value="P-loop_NTPase"/>
</dbReference>
<dbReference type="InterPro" id="IPR000629">
    <property type="entry name" value="RNA-helicase_DEAD-box_CS"/>
</dbReference>
<dbReference type="PANTHER" id="PTHR24031">
    <property type="entry name" value="RNA HELICASE"/>
    <property type="match status" value="1"/>
</dbReference>
<dbReference type="Pfam" id="PF00270">
    <property type="entry name" value="DEAD"/>
    <property type="match status" value="1"/>
</dbReference>
<dbReference type="Pfam" id="PF00271">
    <property type="entry name" value="Helicase_C"/>
    <property type="match status" value="1"/>
</dbReference>
<dbReference type="SMART" id="SM00487">
    <property type="entry name" value="DEXDc"/>
    <property type="match status" value="1"/>
</dbReference>
<dbReference type="SMART" id="SM00490">
    <property type="entry name" value="HELICc"/>
    <property type="match status" value="1"/>
</dbReference>
<dbReference type="SUPFAM" id="SSF52540">
    <property type="entry name" value="P-loop containing nucleoside triphosphate hydrolases"/>
    <property type="match status" value="2"/>
</dbReference>
<dbReference type="PROSITE" id="PS00039">
    <property type="entry name" value="DEAD_ATP_HELICASE"/>
    <property type="match status" value="1"/>
</dbReference>
<dbReference type="PROSITE" id="PS51192">
    <property type="entry name" value="HELICASE_ATP_BIND_1"/>
    <property type="match status" value="1"/>
</dbReference>
<dbReference type="PROSITE" id="PS51194">
    <property type="entry name" value="HELICASE_CTER"/>
    <property type="match status" value="1"/>
</dbReference>
<evidence type="ECO:0000250" key="1"/>
<evidence type="ECO:0000255" key="2"/>
<evidence type="ECO:0000255" key="3">
    <source>
        <dbReference type="PROSITE-ProRule" id="PRU00541"/>
    </source>
</evidence>
<evidence type="ECO:0000255" key="4">
    <source>
        <dbReference type="PROSITE-ProRule" id="PRU00542"/>
    </source>
</evidence>
<evidence type="ECO:0000256" key="5">
    <source>
        <dbReference type="SAM" id="MobiDB-lite"/>
    </source>
</evidence>
<evidence type="ECO:0000305" key="6"/>
<comment type="function">
    <text evidence="1">ATP-dependent RNA helicase required for mitochondrial splicing of group I and II introns. Also required for efficient mitochondrial translation (By similarity).</text>
</comment>
<comment type="catalytic activity">
    <reaction>
        <text>ATP + H2O = ADP + phosphate + H(+)</text>
        <dbReference type="Rhea" id="RHEA:13065"/>
        <dbReference type="ChEBI" id="CHEBI:15377"/>
        <dbReference type="ChEBI" id="CHEBI:15378"/>
        <dbReference type="ChEBI" id="CHEBI:30616"/>
        <dbReference type="ChEBI" id="CHEBI:43474"/>
        <dbReference type="ChEBI" id="CHEBI:456216"/>
        <dbReference type="EC" id="3.6.4.13"/>
    </reaction>
</comment>
<comment type="subcellular location">
    <subcellularLocation>
        <location evidence="1">Mitochondrion matrix</location>
    </subcellularLocation>
</comment>
<comment type="domain">
    <text>The Q motif is unique to and characteristic of the DEAD box family of RNA helicases and controls ATP binding and hydrolysis.</text>
</comment>
<comment type="similarity">
    <text evidence="6">Belongs to the DEAD box helicase family. DDX18/HAS1 subfamily.</text>
</comment>
<protein>
    <recommendedName>
        <fullName>ATP-dependent RNA helicase mss116, mitochondrial</fullName>
        <ecNumber>3.6.4.13</ecNumber>
    </recommendedName>
</protein>
<feature type="transit peptide" description="Mitochondrion" evidence="2">
    <location>
        <begin position="1"/>
        <end position="56"/>
    </location>
</feature>
<feature type="chain" id="PRO_0000256008" description="ATP-dependent RNA helicase mss116, mitochondrial">
    <location>
        <begin position="57"/>
        <end position="655"/>
    </location>
</feature>
<feature type="domain" description="Helicase ATP-binding" evidence="3">
    <location>
        <begin position="116"/>
        <end position="307"/>
    </location>
</feature>
<feature type="domain" description="Helicase C-terminal" evidence="4">
    <location>
        <begin position="341"/>
        <end position="503"/>
    </location>
</feature>
<feature type="region of interest" description="Disordered" evidence="5">
    <location>
        <begin position="594"/>
        <end position="642"/>
    </location>
</feature>
<feature type="short sequence motif" description="Q motif">
    <location>
        <begin position="84"/>
        <end position="113"/>
    </location>
</feature>
<feature type="short sequence motif" description="DEAD box">
    <location>
        <begin position="251"/>
        <end position="254"/>
    </location>
</feature>
<feature type="compositionally biased region" description="Basic and acidic residues" evidence="5">
    <location>
        <begin position="605"/>
        <end position="614"/>
    </location>
</feature>
<feature type="compositionally biased region" description="Basic and acidic residues" evidence="5">
    <location>
        <begin position="621"/>
        <end position="642"/>
    </location>
</feature>
<feature type="binding site" evidence="3">
    <location>
        <begin position="129"/>
        <end position="136"/>
    </location>
    <ligand>
        <name>ATP</name>
        <dbReference type="ChEBI" id="CHEBI:30616"/>
    </ligand>
</feature>
<keyword id="KW-0067">ATP-binding</keyword>
<keyword id="KW-0347">Helicase</keyword>
<keyword id="KW-0378">Hydrolase</keyword>
<keyword id="KW-0496">Mitochondrion</keyword>
<keyword id="KW-0507">mRNA processing</keyword>
<keyword id="KW-0508">mRNA splicing</keyword>
<keyword id="KW-0547">Nucleotide-binding</keyword>
<keyword id="KW-1185">Reference proteome</keyword>
<keyword id="KW-0694">RNA-binding</keyword>
<keyword id="KW-0809">Transit peptide</keyword>
<keyword id="KW-0810">Translation regulation</keyword>